<comment type="catalytic activity">
    <reaction evidence="1">
        <text>(S)-4-amino-5-oxopentanoate = 5-aminolevulinate</text>
        <dbReference type="Rhea" id="RHEA:14265"/>
        <dbReference type="ChEBI" id="CHEBI:57501"/>
        <dbReference type="ChEBI" id="CHEBI:356416"/>
        <dbReference type="EC" id="5.4.3.8"/>
    </reaction>
</comment>
<comment type="cofactor">
    <cofactor evidence="1">
        <name>pyridoxal 5'-phosphate</name>
        <dbReference type="ChEBI" id="CHEBI:597326"/>
    </cofactor>
</comment>
<comment type="pathway">
    <text evidence="1">Porphyrin-containing compound metabolism; protoporphyrin-IX biosynthesis; 5-aminolevulinate from L-glutamyl-tRNA(Glu): step 2/2.</text>
</comment>
<comment type="subunit">
    <text evidence="1">Homodimer.</text>
</comment>
<comment type="subcellular location">
    <subcellularLocation>
        <location evidence="1">Cytoplasm</location>
    </subcellularLocation>
</comment>
<comment type="similarity">
    <text evidence="1">Belongs to the class-III pyridoxal-phosphate-dependent aminotransferase family. HemL subfamily.</text>
</comment>
<keyword id="KW-0963">Cytoplasm</keyword>
<keyword id="KW-0413">Isomerase</keyword>
<keyword id="KW-0627">Porphyrin biosynthesis</keyword>
<keyword id="KW-0663">Pyridoxal phosphate</keyword>
<keyword id="KW-1185">Reference proteome</keyword>
<gene>
    <name evidence="1" type="primary">hemL</name>
    <name type="ordered locus">plu0902</name>
</gene>
<name>GSA_PHOLL</name>
<organism>
    <name type="scientific">Photorhabdus laumondii subsp. laumondii (strain DSM 15139 / CIP 105565 / TT01)</name>
    <name type="common">Photorhabdus luminescens subsp. laumondii</name>
    <dbReference type="NCBI Taxonomy" id="243265"/>
    <lineage>
        <taxon>Bacteria</taxon>
        <taxon>Pseudomonadati</taxon>
        <taxon>Pseudomonadota</taxon>
        <taxon>Gammaproteobacteria</taxon>
        <taxon>Enterobacterales</taxon>
        <taxon>Morganellaceae</taxon>
        <taxon>Photorhabdus</taxon>
    </lineage>
</organism>
<feature type="chain" id="PRO_0000120430" description="Glutamate-1-semialdehyde 2,1-aminomutase">
    <location>
        <begin position="1"/>
        <end position="427"/>
    </location>
</feature>
<feature type="modified residue" description="N6-(pyridoxal phosphate)lysine" evidence="1">
    <location>
        <position position="265"/>
    </location>
</feature>
<accession>Q7N845</accession>
<proteinExistence type="inferred from homology"/>
<dbReference type="EC" id="5.4.3.8" evidence="1"/>
<dbReference type="EMBL" id="BX571861">
    <property type="protein sequence ID" value="CAE13197.1"/>
    <property type="molecule type" value="Genomic_DNA"/>
</dbReference>
<dbReference type="RefSeq" id="WP_011145267.1">
    <property type="nucleotide sequence ID" value="NC_005126.1"/>
</dbReference>
<dbReference type="SMR" id="Q7N845"/>
<dbReference type="STRING" id="243265.plu0902"/>
<dbReference type="GeneID" id="48847192"/>
<dbReference type="KEGG" id="plu:plu0902"/>
<dbReference type="eggNOG" id="COG0001">
    <property type="taxonomic scope" value="Bacteria"/>
</dbReference>
<dbReference type="HOGENOM" id="CLU_016922_1_5_6"/>
<dbReference type="OrthoDB" id="9801052at2"/>
<dbReference type="UniPathway" id="UPA00251">
    <property type="reaction ID" value="UER00317"/>
</dbReference>
<dbReference type="Proteomes" id="UP000002514">
    <property type="component" value="Chromosome"/>
</dbReference>
<dbReference type="GO" id="GO:0005737">
    <property type="term" value="C:cytoplasm"/>
    <property type="evidence" value="ECO:0007669"/>
    <property type="project" value="UniProtKB-SubCell"/>
</dbReference>
<dbReference type="GO" id="GO:0042286">
    <property type="term" value="F:glutamate-1-semialdehyde 2,1-aminomutase activity"/>
    <property type="evidence" value="ECO:0007669"/>
    <property type="project" value="UniProtKB-UniRule"/>
</dbReference>
<dbReference type="GO" id="GO:0030170">
    <property type="term" value="F:pyridoxal phosphate binding"/>
    <property type="evidence" value="ECO:0007669"/>
    <property type="project" value="InterPro"/>
</dbReference>
<dbReference type="GO" id="GO:0008483">
    <property type="term" value="F:transaminase activity"/>
    <property type="evidence" value="ECO:0007669"/>
    <property type="project" value="InterPro"/>
</dbReference>
<dbReference type="GO" id="GO:0006782">
    <property type="term" value="P:protoporphyrinogen IX biosynthetic process"/>
    <property type="evidence" value="ECO:0007669"/>
    <property type="project" value="UniProtKB-UniRule"/>
</dbReference>
<dbReference type="CDD" id="cd00610">
    <property type="entry name" value="OAT_like"/>
    <property type="match status" value="1"/>
</dbReference>
<dbReference type="FunFam" id="3.40.640.10:FF:000021">
    <property type="entry name" value="Glutamate-1-semialdehyde 2,1-aminomutase"/>
    <property type="match status" value="1"/>
</dbReference>
<dbReference type="FunFam" id="3.90.1150.10:FF:000012">
    <property type="entry name" value="Glutamate-1-semialdehyde 2,1-aminomutase"/>
    <property type="match status" value="1"/>
</dbReference>
<dbReference type="Gene3D" id="3.90.1150.10">
    <property type="entry name" value="Aspartate Aminotransferase, domain 1"/>
    <property type="match status" value="1"/>
</dbReference>
<dbReference type="Gene3D" id="3.40.640.10">
    <property type="entry name" value="Type I PLP-dependent aspartate aminotransferase-like (Major domain)"/>
    <property type="match status" value="1"/>
</dbReference>
<dbReference type="HAMAP" id="MF_00375">
    <property type="entry name" value="HemL_aminotrans_3"/>
    <property type="match status" value="1"/>
</dbReference>
<dbReference type="InterPro" id="IPR004639">
    <property type="entry name" value="4pyrrol_synth_GluAld_NH2Trfase"/>
</dbReference>
<dbReference type="InterPro" id="IPR005814">
    <property type="entry name" value="Aminotrans_3"/>
</dbReference>
<dbReference type="InterPro" id="IPR049704">
    <property type="entry name" value="Aminotrans_3_PPA_site"/>
</dbReference>
<dbReference type="InterPro" id="IPR015424">
    <property type="entry name" value="PyrdxlP-dep_Trfase"/>
</dbReference>
<dbReference type="InterPro" id="IPR015421">
    <property type="entry name" value="PyrdxlP-dep_Trfase_major"/>
</dbReference>
<dbReference type="InterPro" id="IPR015422">
    <property type="entry name" value="PyrdxlP-dep_Trfase_small"/>
</dbReference>
<dbReference type="NCBIfam" id="TIGR00713">
    <property type="entry name" value="hemL"/>
    <property type="match status" value="1"/>
</dbReference>
<dbReference type="NCBIfam" id="NF000818">
    <property type="entry name" value="PRK00062.1"/>
    <property type="match status" value="1"/>
</dbReference>
<dbReference type="PANTHER" id="PTHR43713">
    <property type="entry name" value="GLUTAMATE-1-SEMIALDEHYDE 2,1-AMINOMUTASE"/>
    <property type="match status" value="1"/>
</dbReference>
<dbReference type="PANTHER" id="PTHR43713:SF3">
    <property type="entry name" value="GLUTAMATE-1-SEMIALDEHYDE 2,1-AMINOMUTASE 1, CHLOROPLASTIC-RELATED"/>
    <property type="match status" value="1"/>
</dbReference>
<dbReference type="Pfam" id="PF00202">
    <property type="entry name" value="Aminotran_3"/>
    <property type="match status" value="1"/>
</dbReference>
<dbReference type="SUPFAM" id="SSF53383">
    <property type="entry name" value="PLP-dependent transferases"/>
    <property type="match status" value="1"/>
</dbReference>
<dbReference type="PROSITE" id="PS00600">
    <property type="entry name" value="AA_TRANSFER_CLASS_3"/>
    <property type="match status" value="1"/>
</dbReference>
<evidence type="ECO:0000255" key="1">
    <source>
        <dbReference type="HAMAP-Rule" id="MF_00375"/>
    </source>
</evidence>
<sequence length="427" mass="45710">MSQSDILYSQAKQLIPGGVNSPVRAFNGVGGTPLFIKHADGAYLYDVDGKAYIDYVGSWGPMVLGHNHSAIRNAVIKAAEQGLSFGAPTAAEVEMAQLVTELVPSMDMVRMVNSGTEATMSAIRLARGYTHRDKIIKFEGCYHGHADCLLVKAGSGALTIGQPNSPGVPVDFVKHTLTCTYNDLSSVREAFEQYPQEIACIIVEPVAGNMNCVPPQPEFLPGLRALCDEFGALLIIDEVMTGFRVALSGAQSYYDVEPDITCLGKIIGGGMPVGAFGGRYEVMEKLAPIGPVYQAGTLSGNPIAMAAGLACLKEVSQPGVHQRLTELTDNLAAGLTKSAKAANIPLVVNHVGGMFGIFFTDAETVTCYQDVMNCDIERFKHFFHLMLDEGVYLAPSAFEAGFMSIAHTDEDIQRTVNAAARCFAKLK</sequence>
<reference key="1">
    <citation type="journal article" date="2003" name="Nat. Biotechnol.">
        <title>The genome sequence of the entomopathogenic bacterium Photorhabdus luminescens.</title>
        <authorList>
            <person name="Duchaud E."/>
            <person name="Rusniok C."/>
            <person name="Frangeul L."/>
            <person name="Buchrieser C."/>
            <person name="Givaudan A."/>
            <person name="Taourit S."/>
            <person name="Bocs S."/>
            <person name="Boursaux-Eude C."/>
            <person name="Chandler M."/>
            <person name="Charles J.-F."/>
            <person name="Dassa E."/>
            <person name="Derose R."/>
            <person name="Derzelle S."/>
            <person name="Freyssinet G."/>
            <person name="Gaudriault S."/>
            <person name="Medigue C."/>
            <person name="Lanois A."/>
            <person name="Powell K."/>
            <person name="Siguier P."/>
            <person name="Vincent R."/>
            <person name="Wingate V."/>
            <person name="Zouine M."/>
            <person name="Glaser P."/>
            <person name="Boemare N."/>
            <person name="Danchin A."/>
            <person name="Kunst F."/>
        </authorList>
    </citation>
    <scope>NUCLEOTIDE SEQUENCE [LARGE SCALE GENOMIC DNA]</scope>
    <source>
        <strain>DSM 15139 / CIP 105565 / TT01</strain>
    </source>
</reference>
<protein>
    <recommendedName>
        <fullName evidence="1">Glutamate-1-semialdehyde 2,1-aminomutase</fullName>
        <shortName evidence="1">GSA</shortName>
        <ecNumber evidence="1">5.4.3.8</ecNumber>
    </recommendedName>
    <alternativeName>
        <fullName evidence="1">Glutamate-1-semialdehyde aminotransferase</fullName>
        <shortName evidence="1">GSA-AT</shortName>
    </alternativeName>
</protein>